<organism>
    <name type="scientific">Aromatoleum aromaticum (strain DSM 19018 / LMG 30748 / EbN1)</name>
    <name type="common">Azoarcus sp. (strain EbN1)</name>
    <dbReference type="NCBI Taxonomy" id="76114"/>
    <lineage>
        <taxon>Bacteria</taxon>
        <taxon>Pseudomonadati</taxon>
        <taxon>Pseudomonadota</taxon>
        <taxon>Betaproteobacteria</taxon>
        <taxon>Rhodocyclales</taxon>
        <taxon>Rhodocyclaceae</taxon>
        <taxon>Aromatoleum</taxon>
    </lineage>
</organism>
<dbReference type="EC" id="2.7.2.3" evidence="1"/>
<dbReference type="EMBL" id="CR555306">
    <property type="protein sequence ID" value="CAI06703.1"/>
    <property type="molecule type" value="Genomic_DNA"/>
</dbReference>
<dbReference type="RefSeq" id="WP_011236433.1">
    <property type="nucleotide sequence ID" value="NC_006513.1"/>
</dbReference>
<dbReference type="SMR" id="Q5P7K8"/>
<dbReference type="STRING" id="76114.ebA1103"/>
<dbReference type="KEGG" id="eba:ebA1103"/>
<dbReference type="eggNOG" id="COG0126">
    <property type="taxonomic scope" value="Bacteria"/>
</dbReference>
<dbReference type="HOGENOM" id="CLU_025427_0_2_4"/>
<dbReference type="OrthoDB" id="9808460at2"/>
<dbReference type="UniPathway" id="UPA00109">
    <property type="reaction ID" value="UER00185"/>
</dbReference>
<dbReference type="Proteomes" id="UP000006552">
    <property type="component" value="Chromosome"/>
</dbReference>
<dbReference type="GO" id="GO:0005829">
    <property type="term" value="C:cytosol"/>
    <property type="evidence" value="ECO:0007669"/>
    <property type="project" value="TreeGrafter"/>
</dbReference>
<dbReference type="GO" id="GO:0043531">
    <property type="term" value="F:ADP binding"/>
    <property type="evidence" value="ECO:0007669"/>
    <property type="project" value="TreeGrafter"/>
</dbReference>
<dbReference type="GO" id="GO:0005524">
    <property type="term" value="F:ATP binding"/>
    <property type="evidence" value="ECO:0007669"/>
    <property type="project" value="UniProtKB-KW"/>
</dbReference>
<dbReference type="GO" id="GO:0004618">
    <property type="term" value="F:phosphoglycerate kinase activity"/>
    <property type="evidence" value="ECO:0007669"/>
    <property type="project" value="UniProtKB-UniRule"/>
</dbReference>
<dbReference type="GO" id="GO:0006094">
    <property type="term" value="P:gluconeogenesis"/>
    <property type="evidence" value="ECO:0007669"/>
    <property type="project" value="TreeGrafter"/>
</dbReference>
<dbReference type="GO" id="GO:0006096">
    <property type="term" value="P:glycolytic process"/>
    <property type="evidence" value="ECO:0007669"/>
    <property type="project" value="UniProtKB-UniRule"/>
</dbReference>
<dbReference type="FunFam" id="3.40.50.1260:FF:000001">
    <property type="entry name" value="Phosphoglycerate kinase"/>
    <property type="match status" value="1"/>
</dbReference>
<dbReference type="FunFam" id="3.40.50.1260:FF:000002">
    <property type="entry name" value="Phosphoglycerate kinase"/>
    <property type="match status" value="1"/>
</dbReference>
<dbReference type="Gene3D" id="3.40.50.1260">
    <property type="entry name" value="Phosphoglycerate kinase, N-terminal domain"/>
    <property type="match status" value="2"/>
</dbReference>
<dbReference type="HAMAP" id="MF_00145">
    <property type="entry name" value="Phosphoglyc_kinase"/>
    <property type="match status" value="1"/>
</dbReference>
<dbReference type="InterPro" id="IPR001576">
    <property type="entry name" value="Phosphoglycerate_kinase"/>
</dbReference>
<dbReference type="InterPro" id="IPR015911">
    <property type="entry name" value="Phosphoglycerate_kinase_CS"/>
</dbReference>
<dbReference type="InterPro" id="IPR015824">
    <property type="entry name" value="Phosphoglycerate_kinase_N"/>
</dbReference>
<dbReference type="InterPro" id="IPR036043">
    <property type="entry name" value="Phosphoglycerate_kinase_sf"/>
</dbReference>
<dbReference type="PANTHER" id="PTHR11406">
    <property type="entry name" value="PHOSPHOGLYCERATE KINASE"/>
    <property type="match status" value="1"/>
</dbReference>
<dbReference type="PANTHER" id="PTHR11406:SF23">
    <property type="entry name" value="PHOSPHOGLYCERATE KINASE 1, CHLOROPLASTIC-RELATED"/>
    <property type="match status" value="1"/>
</dbReference>
<dbReference type="Pfam" id="PF00162">
    <property type="entry name" value="PGK"/>
    <property type="match status" value="1"/>
</dbReference>
<dbReference type="PIRSF" id="PIRSF000724">
    <property type="entry name" value="Pgk"/>
    <property type="match status" value="1"/>
</dbReference>
<dbReference type="PRINTS" id="PR00477">
    <property type="entry name" value="PHGLYCKINASE"/>
</dbReference>
<dbReference type="SUPFAM" id="SSF53748">
    <property type="entry name" value="Phosphoglycerate kinase"/>
    <property type="match status" value="1"/>
</dbReference>
<dbReference type="PROSITE" id="PS00111">
    <property type="entry name" value="PGLYCERATE_KINASE"/>
    <property type="match status" value="1"/>
</dbReference>
<feature type="chain" id="PRO_1000057962" description="Phosphoglycerate kinase">
    <location>
        <begin position="1"/>
        <end position="394"/>
    </location>
</feature>
<feature type="binding site" evidence="1">
    <location>
        <begin position="21"/>
        <end position="23"/>
    </location>
    <ligand>
        <name>substrate</name>
    </ligand>
</feature>
<feature type="binding site" evidence="1">
    <location>
        <position position="37"/>
    </location>
    <ligand>
        <name>substrate</name>
    </ligand>
</feature>
<feature type="binding site" evidence="1">
    <location>
        <begin position="60"/>
        <end position="63"/>
    </location>
    <ligand>
        <name>substrate</name>
    </ligand>
</feature>
<feature type="binding site" evidence="1">
    <location>
        <position position="115"/>
    </location>
    <ligand>
        <name>substrate</name>
    </ligand>
</feature>
<feature type="binding site" evidence="1">
    <location>
        <position position="148"/>
    </location>
    <ligand>
        <name>substrate</name>
    </ligand>
</feature>
<feature type="binding site" evidence="1">
    <location>
        <position position="199"/>
    </location>
    <ligand>
        <name>ATP</name>
        <dbReference type="ChEBI" id="CHEBI:30616"/>
    </ligand>
</feature>
<feature type="binding site" evidence="1">
    <location>
        <position position="321"/>
    </location>
    <ligand>
        <name>ATP</name>
        <dbReference type="ChEBI" id="CHEBI:30616"/>
    </ligand>
</feature>
<feature type="binding site" evidence="1">
    <location>
        <begin position="347"/>
        <end position="350"/>
    </location>
    <ligand>
        <name>ATP</name>
        <dbReference type="ChEBI" id="CHEBI:30616"/>
    </ligand>
</feature>
<accession>Q5P7K8</accession>
<keyword id="KW-0067">ATP-binding</keyword>
<keyword id="KW-0963">Cytoplasm</keyword>
<keyword id="KW-0324">Glycolysis</keyword>
<keyword id="KW-0418">Kinase</keyword>
<keyword id="KW-0547">Nucleotide-binding</keyword>
<keyword id="KW-1185">Reference proteome</keyword>
<keyword id="KW-0808">Transferase</keyword>
<proteinExistence type="inferred from homology"/>
<comment type="catalytic activity">
    <reaction evidence="1">
        <text>(2R)-3-phosphoglycerate + ATP = (2R)-3-phospho-glyceroyl phosphate + ADP</text>
        <dbReference type="Rhea" id="RHEA:14801"/>
        <dbReference type="ChEBI" id="CHEBI:30616"/>
        <dbReference type="ChEBI" id="CHEBI:57604"/>
        <dbReference type="ChEBI" id="CHEBI:58272"/>
        <dbReference type="ChEBI" id="CHEBI:456216"/>
        <dbReference type="EC" id="2.7.2.3"/>
    </reaction>
</comment>
<comment type="pathway">
    <text evidence="1">Carbohydrate degradation; glycolysis; pyruvate from D-glyceraldehyde 3-phosphate: step 2/5.</text>
</comment>
<comment type="subunit">
    <text evidence="1">Monomer.</text>
</comment>
<comment type="subcellular location">
    <subcellularLocation>
        <location evidence="1">Cytoplasm</location>
    </subcellularLocation>
</comment>
<comment type="similarity">
    <text evidence="1">Belongs to the phosphoglycerate kinase family.</text>
</comment>
<protein>
    <recommendedName>
        <fullName evidence="1">Phosphoglycerate kinase</fullName>
        <ecNumber evidence="1">2.7.2.3</ecNumber>
    </recommendedName>
</protein>
<evidence type="ECO:0000255" key="1">
    <source>
        <dbReference type="HAMAP-Rule" id="MF_00145"/>
    </source>
</evidence>
<name>PGK_AROAE</name>
<sequence>MNVKKLADLDVAGKRVFIRADLNVPQDEAGNIVEDTRIRASLPSIRYCLERSATVMVTSHLGRPTEGECRAEDTLAPIAVRLGELLGKPVRLIRDWVEGGFEVRAGEVVLLENCRCNKGEKKDNEELAKKMAALCDIYVNDAFGTAHRAEATTHGIARFAPVACAGMLMGAEIDALTKATENPARPLVAIVGGAKVSTKLTILKTLAEKVDQLIVGGGIANTFLLASGKRIGESLAEPELVKEAQAIMDMMKARGAEVPLPVDVVVADEVSALARANRIPVDEVGPHDRILDVGPKSSAKLAEIIAHAGTIVWNGPVGVFEHNQFAGGTKMMASAIAHSEAFCIAGGGDTLAAIAKFHIAQDIGYISTGGGAFLEFLEGKKLPAIAALEARFAD</sequence>
<gene>
    <name evidence="1" type="primary">pgk</name>
    <name type="ordered locus">AZOSEA05810</name>
    <name type="ORF">ebA1103</name>
</gene>
<reference key="1">
    <citation type="journal article" date="2005" name="Arch. Microbiol.">
        <title>The genome sequence of an anaerobic aromatic-degrading denitrifying bacterium, strain EbN1.</title>
        <authorList>
            <person name="Rabus R."/>
            <person name="Kube M."/>
            <person name="Heider J."/>
            <person name="Beck A."/>
            <person name="Heitmann K."/>
            <person name="Widdel F."/>
            <person name="Reinhardt R."/>
        </authorList>
    </citation>
    <scope>NUCLEOTIDE SEQUENCE [LARGE SCALE GENOMIC DNA]</scope>
    <source>
        <strain>DSM 19018 / LMG 30748 / EbN1</strain>
    </source>
</reference>